<accession>Q5VUB5</accession>
<accession>D3DRT9</accession>
<accession>Q32M49</accession>
<accession>Q8N4I0</accession>
<comment type="function">
    <text evidence="5">Involved in the regulation of the cytoskeletal dynamics, plays a role in actin stress fiber formation.</text>
</comment>
<comment type="subunit">
    <text evidence="5">Interacts with ADAM10, NSG1 and OAZ1.</text>
</comment>
<comment type="interaction">
    <interactant intactId="EBI-2682893">
        <id>Q5VUB5</id>
    </interactant>
    <interactant intactId="EBI-6912267">
        <id>A6NK89</id>
        <label>RASSF10</label>
    </interactant>
    <organismsDiffer>false</organismsDiffer>
    <experiments>3</experiments>
</comment>
<comment type="subcellular location">
    <subcellularLocation>
        <location evidence="5">Cell membrane</location>
        <topology evidence="8">Single-pass type I membrane protein</topology>
    </subcellularLocation>
</comment>
<comment type="tissue specificity">
    <text evidence="5">Expressed in heart, brain, liver, skeletal muscle, kidney and pancreas (PubMed:30312582). In brain, expressed by glia, pyramidal neurons and astrocytes (at protein level) (PubMed:30312582). Highly expressed in placental trophoblasts (PubMed:30312582).</text>
</comment>
<comment type="similarity">
    <text evidence="7">Belongs to the FAM171 family.</text>
</comment>
<name>F1711_HUMAN</name>
<dbReference type="EMBL" id="AY683003">
    <property type="protein sequence ID" value="AAV85904.1"/>
    <property type="molecule type" value="mRNA"/>
</dbReference>
<dbReference type="EMBL" id="AL590365">
    <property type="status" value="NOT_ANNOTATED_CDS"/>
    <property type="molecule type" value="Genomic_DNA"/>
</dbReference>
<dbReference type="EMBL" id="AL139338">
    <property type="status" value="NOT_ANNOTATED_CDS"/>
    <property type="molecule type" value="Genomic_DNA"/>
</dbReference>
<dbReference type="EMBL" id="AL607028">
    <property type="status" value="NOT_ANNOTATED_CDS"/>
    <property type="molecule type" value="Genomic_DNA"/>
</dbReference>
<dbReference type="EMBL" id="CH471072">
    <property type="protein sequence ID" value="EAW86237.1"/>
    <property type="molecule type" value="Genomic_DNA"/>
</dbReference>
<dbReference type="EMBL" id="BC034232">
    <property type="protein sequence ID" value="AAH34232.1"/>
    <property type="molecule type" value="mRNA"/>
</dbReference>
<dbReference type="EMBL" id="BC109302">
    <property type="protein sequence ID" value="AAI09303.1"/>
    <property type="molecule type" value="mRNA"/>
</dbReference>
<dbReference type="EMBL" id="BC109303">
    <property type="protein sequence ID" value="AAI09304.1"/>
    <property type="molecule type" value="mRNA"/>
</dbReference>
<dbReference type="CCDS" id="CCDS31154.1"/>
<dbReference type="RefSeq" id="NP_001010924.1">
    <property type="nucleotide sequence ID" value="NM_001010924.2"/>
</dbReference>
<dbReference type="BioGRID" id="128680">
    <property type="interactions" value="91"/>
</dbReference>
<dbReference type="FunCoup" id="Q5VUB5">
    <property type="interactions" value="1032"/>
</dbReference>
<dbReference type="IntAct" id="Q5VUB5">
    <property type="interactions" value="56"/>
</dbReference>
<dbReference type="MINT" id="Q5VUB5"/>
<dbReference type="STRING" id="9606.ENSP00000367356"/>
<dbReference type="GlyCosmos" id="Q5VUB5">
    <property type="glycosylation" value="4 sites, 1 glycan"/>
</dbReference>
<dbReference type="GlyGen" id="Q5VUB5">
    <property type="glycosylation" value="4 sites, 1 O-linked glycan (1 site)"/>
</dbReference>
<dbReference type="iPTMnet" id="Q5VUB5"/>
<dbReference type="PhosphoSitePlus" id="Q5VUB5"/>
<dbReference type="SwissPalm" id="Q5VUB5"/>
<dbReference type="BioMuta" id="FAM171A1"/>
<dbReference type="DMDM" id="74747078"/>
<dbReference type="jPOST" id="Q5VUB5"/>
<dbReference type="MassIVE" id="Q5VUB5"/>
<dbReference type="PaxDb" id="9606-ENSP00000367356"/>
<dbReference type="PeptideAtlas" id="Q5VUB5"/>
<dbReference type="ProteomicsDB" id="65405"/>
<dbReference type="Antibodypedia" id="25092">
    <property type="antibodies" value="61 antibodies from 14 providers"/>
</dbReference>
<dbReference type="DNASU" id="221061"/>
<dbReference type="Ensembl" id="ENST00000378116.9">
    <property type="protein sequence ID" value="ENSP00000367356.4"/>
    <property type="gene ID" value="ENSG00000148468.17"/>
</dbReference>
<dbReference type="GeneID" id="221061"/>
<dbReference type="KEGG" id="hsa:221061"/>
<dbReference type="MANE-Select" id="ENST00000378116.9">
    <property type="protein sequence ID" value="ENSP00000367356.4"/>
    <property type="RefSeq nucleotide sequence ID" value="NM_001010924.2"/>
    <property type="RefSeq protein sequence ID" value="NP_001010924.1"/>
</dbReference>
<dbReference type="UCSC" id="uc001iob.4">
    <property type="organism name" value="human"/>
</dbReference>
<dbReference type="AGR" id="HGNC:23522"/>
<dbReference type="CTD" id="221061"/>
<dbReference type="DisGeNET" id="221061"/>
<dbReference type="GeneCards" id="FAM171A1"/>
<dbReference type="HGNC" id="HGNC:23522">
    <property type="gene designation" value="FAM171A1"/>
</dbReference>
<dbReference type="HPA" id="ENSG00000148468">
    <property type="expression patterns" value="Tissue enhanced (brain)"/>
</dbReference>
<dbReference type="neXtProt" id="NX_Q5VUB5"/>
<dbReference type="OpenTargets" id="ENSG00000148468"/>
<dbReference type="PharmGKB" id="PA162387176"/>
<dbReference type="VEuPathDB" id="HostDB:ENSG00000148468"/>
<dbReference type="eggNOG" id="ENOG502QR89">
    <property type="taxonomic scope" value="Eukaryota"/>
</dbReference>
<dbReference type="GeneTree" id="ENSGT00950000183184"/>
<dbReference type="HOGENOM" id="CLU_019729_0_0_1"/>
<dbReference type="InParanoid" id="Q5VUB5"/>
<dbReference type="OMA" id="PAECMMS"/>
<dbReference type="OrthoDB" id="8762914at2759"/>
<dbReference type="PAN-GO" id="Q5VUB5">
    <property type="GO annotations" value="3 GO annotations based on evolutionary models"/>
</dbReference>
<dbReference type="PhylomeDB" id="Q5VUB5"/>
<dbReference type="TreeFam" id="TF331338"/>
<dbReference type="PathwayCommons" id="Q5VUB5"/>
<dbReference type="SignaLink" id="Q5VUB5"/>
<dbReference type="BioGRID-ORCS" id="221061">
    <property type="hits" value="10 hits in 1161 CRISPR screens"/>
</dbReference>
<dbReference type="CD-CODE" id="FB4E32DD">
    <property type="entry name" value="Presynaptic clusters and postsynaptic densities"/>
</dbReference>
<dbReference type="ChiTaRS" id="FAM171A1">
    <property type="organism name" value="human"/>
</dbReference>
<dbReference type="GenomeRNAi" id="221061"/>
<dbReference type="Pharos" id="Q5VUB5">
    <property type="development level" value="Tdark"/>
</dbReference>
<dbReference type="PRO" id="PR:Q5VUB5"/>
<dbReference type="Proteomes" id="UP000005640">
    <property type="component" value="Chromosome 10"/>
</dbReference>
<dbReference type="RNAct" id="Q5VUB5">
    <property type="molecule type" value="protein"/>
</dbReference>
<dbReference type="Bgee" id="ENSG00000148468">
    <property type="expression patterns" value="Expressed in inferior vagus X ganglion and 206 other cell types or tissues"/>
</dbReference>
<dbReference type="ExpressionAtlas" id="Q5VUB5">
    <property type="expression patterns" value="baseline and differential"/>
</dbReference>
<dbReference type="GO" id="GO:0005886">
    <property type="term" value="C:plasma membrane"/>
    <property type="evidence" value="ECO:0000314"/>
    <property type="project" value="UniProtKB"/>
</dbReference>
<dbReference type="GO" id="GO:0008360">
    <property type="term" value="P:regulation of cell shape"/>
    <property type="evidence" value="ECO:0000315"/>
    <property type="project" value="UniProtKB"/>
</dbReference>
<dbReference type="GO" id="GO:0043149">
    <property type="term" value="P:stress fiber assembly"/>
    <property type="evidence" value="ECO:0000315"/>
    <property type="project" value="UniProtKB"/>
</dbReference>
<dbReference type="InterPro" id="IPR018890">
    <property type="entry name" value="FAM171"/>
</dbReference>
<dbReference type="InterPro" id="IPR049175">
    <property type="entry name" value="FAM171_C"/>
</dbReference>
<dbReference type="InterPro" id="IPR048530">
    <property type="entry name" value="FAM171_N"/>
</dbReference>
<dbReference type="PANTHER" id="PTHR31626:SF1">
    <property type="entry name" value="PROTEIN FAM171A1"/>
    <property type="match status" value="1"/>
</dbReference>
<dbReference type="PANTHER" id="PTHR31626">
    <property type="entry name" value="SUSHI DOMAIN-CONTAINING PROTEIN"/>
    <property type="match status" value="1"/>
</dbReference>
<dbReference type="Pfam" id="PF20771">
    <property type="entry name" value="FAM171A1-2-B_C"/>
    <property type="match status" value="1"/>
</dbReference>
<dbReference type="Pfam" id="PF10577">
    <property type="entry name" value="FAM171A1-2-B_N"/>
    <property type="match status" value="1"/>
</dbReference>
<gene>
    <name evidence="9" type="primary">FAM171A1</name>
    <name evidence="6" type="synonym">APCN</name>
    <name type="synonym">C10orf38</name>
</gene>
<organism>
    <name type="scientific">Homo sapiens</name>
    <name type="common">Human</name>
    <dbReference type="NCBI Taxonomy" id="9606"/>
    <lineage>
        <taxon>Eukaryota</taxon>
        <taxon>Metazoa</taxon>
        <taxon>Chordata</taxon>
        <taxon>Craniata</taxon>
        <taxon>Vertebrata</taxon>
        <taxon>Euteleostomi</taxon>
        <taxon>Mammalia</taxon>
        <taxon>Eutheria</taxon>
        <taxon>Euarchontoglires</taxon>
        <taxon>Primates</taxon>
        <taxon>Haplorrhini</taxon>
        <taxon>Catarrhini</taxon>
        <taxon>Hominidae</taxon>
        <taxon>Homo</taxon>
    </lineage>
</organism>
<reference key="1">
    <citation type="submission" date="2004-07" db="EMBL/GenBank/DDBJ databases">
        <title>Cloning and expression profile of a novel gene isolated from DiGeorge syndrome critical region on chromosome 10.</title>
        <authorList>
            <person name="Attalla H."/>
            <person name="Karlsson L."/>
            <person name="Paetau A."/>
            <person name="Andersson L.C."/>
        </authorList>
    </citation>
    <scope>NUCLEOTIDE SEQUENCE [MRNA]</scope>
    <source>
        <tissue>Kidney</tissue>
    </source>
</reference>
<reference key="2">
    <citation type="journal article" date="2004" name="Nature">
        <title>The DNA sequence and comparative analysis of human chromosome 10.</title>
        <authorList>
            <person name="Deloukas P."/>
            <person name="Earthrowl M.E."/>
            <person name="Grafham D.V."/>
            <person name="Rubenfield M."/>
            <person name="French L."/>
            <person name="Steward C.A."/>
            <person name="Sims S.K."/>
            <person name="Jones M.C."/>
            <person name="Searle S."/>
            <person name="Scott C."/>
            <person name="Howe K."/>
            <person name="Hunt S.E."/>
            <person name="Andrews T.D."/>
            <person name="Gilbert J.G.R."/>
            <person name="Swarbreck D."/>
            <person name="Ashurst J.L."/>
            <person name="Taylor A."/>
            <person name="Battles J."/>
            <person name="Bird C.P."/>
            <person name="Ainscough R."/>
            <person name="Almeida J.P."/>
            <person name="Ashwell R.I.S."/>
            <person name="Ambrose K.D."/>
            <person name="Babbage A.K."/>
            <person name="Bagguley C.L."/>
            <person name="Bailey J."/>
            <person name="Banerjee R."/>
            <person name="Bates K."/>
            <person name="Beasley H."/>
            <person name="Bray-Allen S."/>
            <person name="Brown A.J."/>
            <person name="Brown J.Y."/>
            <person name="Burford D.C."/>
            <person name="Burrill W."/>
            <person name="Burton J."/>
            <person name="Cahill P."/>
            <person name="Camire D."/>
            <person name="Carter N.P."/>
            <person name="Chapman J.C."/>
            <person name="Clark S.Y."/>
            <person name="Clarke G."/>
            <person name="Clee C.M."/>
            <person name="Clegg S."/>
            <person name="Corby N."/>
            <person name="Coulson A."/>
            <person name="Dhami P."/>
            <person name="Dutta I."/>
            <person name="Dunn M."/>
            <person name="Faulkner L."/>
            <person name="Frankish A."/>
            <person name="Frankland J.A."/>
            <person name="Garner P."/>
            <person name="Garnett J."/>
            <person name="Gribble S."/>
            <person name="Griffiths C."/>
            <person name="Grocock R."/>
            <person name="Gustafson E."/>
            <person name="Hammond S."/>
            <person name="Harley J.L."/>
            <person name="Hart E."/>
            <person name="Heath P.D."/>
            <person name="Ho T.P."/>
            <person name="Hopkins B."/>
            <person name="Horne J."/>
            <person name="Howden P.J."/>
            <person name="Huckle E."/>
            <person name="Hynds C."/>
            <person name="Johnson C."/>
            <person name="Johnson D."/>
            <person name="Kana A."/>
            <person name="Kay M."/>
            <person name="Kimberley A.M."/>
            <person name="Kershaw J.K."/>
            <person name="Kokkinaki M."/>
            <person name="Laird G.K."/>
            <person name="Lawlor S."/>
            <person name="Lee H.M."/>
            <person name="Leongamornlert D.A."/>
            <person name="Laird G."/>
            <person name="Lloyd C."/>
            <person name="Lloyd D.M."/>
            <person name="Loveland J."/>
            <person name="Lovell J."/>
            <person name="McLaren S."/>
            <person name="McLay K.E."/>
            <person name="McMurray A."/>
            <person name="Mashreghi-Mohammadi M."/>
            <person name="Matthews L."/>
            <person name="Milne S."/>
            <person name="Nickerson T."/>
            <person name="Nguyen M."/>
            <person name="Overton-Larty E."/>
            <person name="Palmer S.A."/>
            <person name="Pearce A.V."/>
            <person name="Peck A.I."/>
            <person name="Pelan S."/>
            <person name="Phillimore B."/>
            <person name="Porter K."/>
            <person name="Rice C.M."/>
            <person name="Rogosin A."/>
            <person name="Ross M.T."/>
            <person name="Sarafidou T."/>
            <person name="Sehra H.K."/>
            <person name="Shownkeen R."/>
            <person name="Skuce C.D."/>
            <person name="Smith M."/>
            <person name="Standring L."/>
            <person name="Sycamore N."/>
            <person name="Tester J."/>
            <person name="Thorpe A."/>
            <person name="Torcasso W."/>
            <person name="Tracey A."/>
            <person name="Tromans A."/>
            <person name="Tsolas J."/>
            <person name="Wall M."/>
            <person name="Walsh J."/>
            <person name="Wang H."/>
            <person name="Weinstock K."/>
            <person name="West A.P."/>
            <person name="Willey D.L."/>
            <person name="Whitehead S.L."/>
            <person name="Wilming L."/>
            <person name="Wray P.W."/>
            <person name="Young L."/>
            <person name="Chen Y."/>
            <person name="Lovering R.C."/>
            <person name="Moschonas N.K."/>
            <person name="Siebert R."/>
            <person name="Fechtel K."/>
            <person name="Bentley D."/>
            <person name="Durbin R.M."/>
            <person name="Hubbard T."/>
            <person name="Doucette-Stamm L."/>
            <person name="Beck S."/>
            <person name="Smith D.R."/>
            <person name="Rogers J."/>
        </authorList>
    </citation>
    <scope>NUCLEOTIDE SEQUENCE [LARGE SCALE GENOMIC DNA]</scope>
</reference>
<reference key="3">
    <citation type="submission" date="2005-09" db="EMBL/GenBank/DDBJ databases">
        <authorList>
            <person name="Mural R.J."/>
            <person name="Istrail S."/>
            <person name="Sutton G.G."/>
            <person name="Florea L."/>
            <person name="Halpern A.L."/>
            <person name="Mobarry C.M."/>
            <person name="Lippert R."/>
            <person name="Walenz B."/>
            <person name="Shatkay H."/>
            <person name="Dew I."/>
            <person name="Miller J.R."/>
            <person name="Flanigan M.J."/>
            <person name="Edwards N.J."/>
            <person name="Bolanos R."/>
            <person name="Fasulo D."/>
            <person name="Halldorsson B.V."/>
            <person name="Hannenhalli S."/>
            <person name="Turner R."/>
            <person name="Yooseph S."/>
            <person name="Lu F."/>
            <person name="Nusskern D.R."/>
            <person name="Shue B.C."/>
            <person name="Zheng X.H."/>
            <person name="Zhong F."/>
            <person name="Delcher A.L."/>
            <person name="Huson D.H."/>
            <person name="Kravitz S.A."/>
            <person name="Mouchard L."/>
            <person name="Reinert K."/>
            <person name="Remington K.A."/>
            <person name="Clark A.G."/>
            <person name="Waterman M.S."/>
            <person name="Eichler E.E."/>
            <person name="Adams M.D."/>
            <person name="Hunkapiller M.W."/>
            <person name="Myers E.W."/>
            <person name="Venter J.C."/>
        </authorList>
    </citation>
    <scope>NUCLEOTIDE SEQUENCE [LARGE SCALE GENOMIC DNA]</scope>
</reference>
<reference key="4">
    <citation type="journal article" date="2004" name="Genome Res.">
        <title>The status, quality, and expansion of the NIH full-length cDNA project: the Mammalian Gene Collection (MGC).</title>
        <authorList>
            <consortium name="The MGC Project Team"/>
        </authorList>
    </citation>
    <scope>NUCLEOTIDE SEQUENCE [LARGE SCALE MRNA]</scope>
    <scope>VARIANT SER-465</scope>
    <source>
        <tissue>Brain</tissue>
    </source>
</reference>
<reference key="5">
    <citation type="journal article" date="2008" name="Proteomics">
        <title>Large-scale phosphoproteome analysis of human liver tissue by enrichment and fractionation of phosphopeptides with strong anion exchange chromatography.</title>
        <authorList>
            <person name="Han G."/>
            <person name="Ye M."/>
            <person name="Zhou H."/>
            <person name="Jiang X."/>
            <person name="Feng S."/>
            <person name="Jiang X."/>
            <person name="Tian R."/>
            <person name="Wan D."/>
            <person name="Zou H."/>
            <person name="Gu J."/>
        </authorList>
    </citation>
    <scope>PHOSPHORYLATION [LARGE SCALE ANALYSIS] AT SER-855</scope>
    <scope>IDENTIFICATION BY MASS SPECTROMETRY [LARGE SCALE ANALYSIS]</scope>
    <source>
        <tissue>Liver</tissue>
    </source>
</reference>
<reference key="6">
    <citation type="journal article" date="2009" name="J. Proteome Res.">
        <title>Glycoproteomics analysis of human liver tissue by combination of multiple enzyme digestion and hydrazide chemistry.</title>
        <authorList>
            <person name="Chen R."/>
            <person name="Jiang X."/>
            <person name="Sun D."/>
            <person name="Han G."/>
            <person name="Wang F."/>
            <person name="Ye M."/>
            <person name="Wang L."/>
            <person name="Zou H."/>
        </authorList>
    </citation>
    <scope>GLYCOSYLATION [LARGE SCALE ANALYSIS] AT ASN-159</scope>
    <source>
        <tissue>Liver</tissue>
    </source>
</reference>
<reference key="7">
    <citation type="journal article" date="2013" name="J. Proteome Res.">
        <title>Toward a comprehensive characterization of a human cancer cell phosphoproteome.</title>
        <authorList>
            <person name="Zhou H."/>
            <person name="Di Palma S."/>
            <person name="Preisinger C."/>
            <person name="Peng M."/>
            <person name="Polat A.N."/>
            <person name="Heck A.J."/>
            <person name="Mohammed S."/>
        </authorList>
    </citation>
    <scope>PHOSPHORYLATION [LARGE SCALE ANALYSIS] AT SER-358; SER-360; SER-422; SER-525 AND SER-849</scope>
    <scope>IDENTIFICATION BY MASS SPECTROMETRY [LARGE SCALE ANALYSIS]</scope>
    <source>
        <tissue>Erythroleukemia</tissue>
    </source>
</reference>
<reference key="8">
    <citation type="journal article" date="2014" name="J. Proteomics">
        <title>An enzyme assisted RP-RPLC approach for in-depth analysis of human liver phosphoproteome.</title>
        <authorList>
            <person name="Bian Y."/>
            <person name="Song C."/>
            <person name="Cheng K."/>
            <person name="Dong M."/>
            <person name="Wang F."/>
            <person name="Huang J."/>
            <person name="Sun D."/>
            <person name="Wang L."/>
            <person name="Ye M."/>
            <person name="Zou H."/>
        </authorList>
    </citation>
    <scope>PHOSPHORYLATION [LARGE SCALE ANALYSIS] AT SER-371; SER-443 AND SER-849</scope>
    <scope>IDENTIFICATION BY MASS SPECTROMETRY [LARGE SCALE ANALYSIS]</scope>
    <source>
        <tissue>Liver</tissue>
    </source>
</reference>
<reference key="9">
    <citation type="journal article" date="2019" name="Am. J. Pathol.">
        <title>Astroprincin (FAM171A1, C10orf38): A Regulator of Human Cell Shape and Invasive Growth.</title>
        <authorList>
            <person name="Rasila T."/>
            <person name="Saavalainen O."/>
            <person name="Attalla H."/>
            <person name="Lankila P."/>
            <person name="Haglund C."/>
            <person name="Hoelttae E."/>
            <person name="Andersson L.C."/>
        </authorList>
    </citation>
    <scope>FUNCTION</scope>
    <scope>TISSUE SPECIFICITY</scope>
    <scope>GLYCOSYLATION AT ASN-159 AND ASN-194</scope>
    <scope>MUTAGENESIS OF SER-136; ASN-159; ASN-190 AND ASN-194</scope>
    <scope>TOPOLOGY</scope>
    <scope>SUBCELLULAR LOCATION</scope>
    <scope>INTERACTION WITH ADAM10; NSG1 AND OAZ1</scope>
</reference>
<sequence length="890" mass="97854">MSRSATLLLCLLGCHVWKAVTKTLREPGAGAQEVTLKVHISDASTHQPVADALIEIFTNQASIASGTSGTDGVAFIKFQYKLGSQLIVTASKHAYVPNSAPWKPIRLPVFSSLSLGLLPERSATLMVYEDVVQIVSGFQGARPQPRVHFQRRALRLPENTSYSDLTAFLTAASSPSEVDSFPYLRGLDGNGTGNSTRHDLTPVTAVSVHLLSSNGTPVLVDGPIYVTVPLATQSSLRHNAYVAAWRFDQKLGTWLKSGLGLVHQEGSQLTWTYIAPQLGYWVAAMSPPIPGPVVTQDITTYHTVFLLAILGGMAFILLVLLCLLLYYCRRKCLKPRQHHRKLQLPAGLESSKRDQSTSMSHINLLFSRRASEFPGPLSVTSHGRPEAPGTKELMSGVHLEMMSPGGEGDLHTPMLKLSYSTSQEFSSREELLSCKEEDKSQISFDNLTPSGTLGKDYHKSVEVFPLKARKSMEREGYESSGNDDYRGSYNTVLSQPLFEKQDREGPASTGSKLTIQEHLYPAPSSPEKEQLLDRRPTECMMSRSVDHLERPTSFPRPGQLICCSSVDQVNDSVYRKVLPALVIPAHYMKLPGDHSYVSQPLVVPADQQLEIERLQAELSNPHAGIFPHPSSQIQPQPLSSQAISQQHLQDAGTREWSPQNASMSESLSIPASLNDAALAQMNSEVQLLTEKALMELGGGKPLPHPRAWFVSLDGRSNAHVRHSYIDLQRAGRNGSNDASLDSGVDMNEPKSARKGRGDALSLQQNYPPVQEHQQKEPRAPDSTAYTQLVYLDDVEQSGSECGTTVCTPEDSALRCLLEGSSRRSGGQLPSLQEETTRRTADAPSEPAASPHQRRSAHEEEEDDDDDDQGEDKKSPWQKREERPLMAFNIK</sequence>
<protein>
    <recommendedName>
        <fullName evidence="7">Protein FAM171A1</fullName>
    </recommendedName>
    <alternativeName>
        <fullName evidence="6">Astroprincin</fullName>
        <shortName evidence="6">APCN</shortName>
    </alternativeName>
</protein>
<keyword id="KW-1003">Cell membrane</keyword>
<keyword id="KW-0325">Glycoprotein</keyword>
<keyword id="KW-0472">Membrane</keyword>
<keyword id="KW-0597">Phosphoprotein</keyword>
<keyword id="KW-1267">Proteomics identification</keyword>
<keyword id="KW-1185">Reference proteome</keyword>
<keyword id="KW-0732">Signal</keyword>
<keyword id="KW-0812">Transmembrane</keyword>
<keyword id="KW-1133">Transmembrane helix</keyword>
<proteinExistence type="evidence at protein level"/>
<evidence type="ECO:0000255" key="1"/>
<evidence type="ECO:0000256" key="2">
    <source>
        <dbReference type="SAM" id="MobiDB-lite"/>
    </source>
</evidence>
<evidence type="ECO:0000269" key="3">
    <source>
    </source>
</evidence>
<evidence type="ECO:0000269" key="4">
    <source>
    </source>
</evidence>
<evidence type="ECO:0000269" key="5">
    <source>
    </source>
</evidence>
<evidence type="ECO:0000303" key="6">
    <source>
    </source>
</evidence>
<evidence type="ECO:0000305" key="7"/>
<evidence type="ECO:0000305" key="8">
    <source>
    </source>
</evidence>
<evidence type="ECO:0000312" key="9">
    <source>
        <dbReference type="HGNC" id="HGNC:23522"/>
    </source>
</evidence>
<evidence type="ECO:0007744" key="10">
    <source>
    </source>
</evidence>
<evidence type="ECO:0007744" key="11">
    <source>
    </source>
</evidence>
<evidence type="ECO:0007744" key="12">
    <source>
    </source>
</evidence>
<feature type="signal peptide" evidence="1">
    <location>
        <begin position="1"/>
        <end position="21"/>
    </location>
</feature>
<feature type="chain" id="PRO_0000274263" description="Protein FAM171A1">
    <location>
        <begin position="22"/>
        <end position="890"/>
    </location>
</feature>
<feature type="topological domain" description="Extracellular" evidence="5">
    <location>
        <begin position="22"/>
        <end position="303"/>
    </location>
</feature>
<feature type="transmembrane region" description="Helical" evidence="1">
    <location>
        <begin position="304"/>
        <end position="324"/>
    </location>
</feature>
<feature type="topological domain" description="Cytoplasmic" evidence="5">
    <location>
        <begin position="325"/>
        <end position="890"/>
    </location>
</feature>
<feature type="region of interest" description="Disordered" evidence="2">
    <location>
        <begin position="730"/>
        <end position="759"/>
    </location>
</feature>
<feature type="region of interest" description="Disordered" evidence="2">
    <location>
        <begin position="818"/>
        <end position="890"/>
    </location>
</feature>
<feature type="compositionally biased region" description="Basic and acidic residues" evidence="2">
    <location>
        <begin position="747"/>
        <end position="757"/>
    </location>
</feature>
<feature type="compositionally biased region" description="Polar residues" evidence="2">
    <location>
        <begin position="822"/>
        <end position="833"/>
    </location>
</feature>
<feature type="compositionally biased region" description="Acidic residues" evidence="2">
    <location>
        <begin position="858"/>
        <end position="869"/>
    </location>
</feature>
<feature type="compositionally biased region" description="Basic and acidic residues" evidence="2">
    <location>
        <begin position="870"/>
        <end position="883"/>
    </location>
</feature>
<feature type="modified residue" description="Phosphoserine" evidence="11">
    <location>
        <position position="358"/>
    </location>
</feature>
<feature type="modified residue" description="Phosphoserine" evidence="11">
    <location>
        <position position="360"/>
    </location>
</feature>
<feature type="modified residue" description="Phosphoserine" evidence="12">
    <location>
        <position position="371"/>
    </location>
</feature>
<feature type="modified residue" description="Phosphoserine" evidence="11">
    <location>
        <position position="422"/>
    </location>
</feature>
<feature type="modified residue" description="Phosphoserine" evidence="12">
    <location>
        <position position="443"/>
    </location>
</feature>
<feature type="modified residue" description="Phosphoserine" evidence="11">
    <location>
        <position position="525"/>
    </location>
</feature>
<feature type="modified residue" description="Phosphoserine" evidence="11 12">
    <location>
        <position position="849"/>
    </location>
</feature>
<feature type="modified residue" description="Phosphoserine" evidence="10">
    <location>
        <position position="855"/>
    </location>
</feature>
<feature type="glycosylation site" description="N-linked (GlcNAc...) asparagine" evidence="4 5">
    <location>
        <position position="159"/>
    </location>
</feature>
<feature type="glycosylation site" description="N-linked (GlcNAc...) asparagine" evidence="1">
    <location>
        <position position="190"/>
    </location>
</feature>
<feature type="glycosylation site" description="N-linked (GlcNAc...) asparagine" evidence="5">
    <location>
        <position position="194"/>
    </location>
</feature>
<feature type="sequence variant" id="VAR_030220" description="In dbSNP:rs3814165." evidence="3">
    <original>P</original>
    <variation>S</variation>
    <location>
        <position position="465"/>
    </location>
</feature>
<feature type="mutagenesis site" description="No effect on glycosylation." evidence="5">
    <original>S</original>
    <variation>A</variation>
    <location>
        <position position="136"/>
    </location>
</feature>
<feature type="mutagenesis site" description="Decreases glycosylation levels. Abolishes glycosylation; when associated with A-194." evidence="5">
    <original>N</original>
    <variation>A</variation>
    <location>
        <position position="159"/>
    </location>
</feature>
<feature type="mutagenesis site" description="No effect on glycosylation." evidence="5">
    <original>N</original>
    <variation>A</variation>
    <location>
        <position position="190"/>
    </location>
</feature>
<feature type="mutagenesis site" description="Decreases glycosylation levels. Abolishes glycosylation; when associated with A-159." evidence="5">
    <original>N</original>
    <variation>A</variation>
    <location>
        <position position="194"/>
    </location>
</feature>
<feature type="sequence conflict" description="In Ref. 4; AAI09304." evidence="7" ref="4">
    <original>L</original>
    <variation>P</variation>
    <location>
        <position position="118"/>
    </location>
</feature>
<feature type="sequence conflict" description="In Ref. 4; AAH34232." evidence="7" ref="4">
    <original>G</original>
    <variation>R</variation>
    <location>
        <position position="592"/>
    </location>
</feature>
<feature type="sequence conflict" description="In Ref. 4; AAH34232." evidence="7" ref="4">
    <original>P</original>
    <variation>Q</variation>
    <location>
        <position position="670"/>
    </location>
</feature>